<keyword id="KW-1003">Cell membrane</keyword>
<keyword id="KW-0285">Flavoprotein</keyword>
<keyword id="KW-0288">FMN</keyword>
<keyword id="KW-0472">Membrane</keyword>
<keyword id="KW-0560">Oxidoreductase</keyword>
<keyword id="KW-0665">Pyrimidine biosynthesis</keyword>
<proteinExistence type="inferred from homology"/>
<organism>
    <name type="scientific">Helicobacter pylori (strain Shi470)</name>
    <dbReference type="NCBI Taxonomy" id="512562"/>
    <lineage>
        <taxon>Bacteria</taxon>
        <taxon>Pseudomonadati</taxon>
        <taxon>Campylobacterota</taxon>
        <taxon>Epsilonproteobacteria</taxon>
        <taxon>Campylobacterales</taxon>
        <taxon>Helicobacteraceae</taxon>
        <taxon>Helicobacter</taxon>
    </lineage>
</organism>
<dbReference type="EC" id="1.3.5.2" evidence="1"/>
<dbReference type="EMBL" id="CP001072">
    <property type="protein sequence ID" value="ACD47901.1"/>
    <property type="molecule type" value="Genomic_DNA"/>
</dbReference>
<dbReference type="RefSeq" id="WP_000967046.1">
    <property type="nucleotide sequence ID" value="NC_010698.2"/>
</dbReference>
<dbReference type="SMR" id="B2USR9"/>
<dbReference type="KEGG" id="hps:HPSH_02255"/>
<dbReference type="HOGENOM" id="CLU_013640_2_0_7"/>
<dbReference type="UniPathway" id="UPA00070">
    <property type="reaction ID" value="UER00946"/>
</dbReference>
<dbReference type="GO" id="GO:0005737">
    <property type="term" value="C:cytoplasm"/>
    <property type="evidence" value="ECO:0007669"/>
    <property type="project" value="InterPro"/>
</dbReference>
<dbReference type="GO" id="GO:0005886">
    <property type="term" value="C:plasma membrane"/>
    <property type="evidence" value="ECO:0007669"/>
    <property type="project" value="UniProtKB-SubCell"/>
</dbReference>
<dbReference type="GO" id="GO:0106430">
    <property type="term" value="F:dihydroorotate dehydrogenase (quinone) activity"/>
    <property type="evidence" value="ECO:0007669"/>
    <property type="project" value="UniProtKB-EC"/>
</dbReference>
<dbReference type="GO" id="GO:0006207">
    <property type="term" value="P:'de novo' pyrimidine nucleobase biosynthetic process"/>
    <property type="evidence" value="ECO:0007669"/>
    <property type="project" value="InterPro"/>
</dbReference>
<dbReference type="GO" id="GO:0044205">
    <property type="term" value="P:'de novo' UMP biosynthetic process"/>
    <property type="evidence" value="ECO:0007669"/>
    <property type="project" value="UniProtKB-UniRule"/>
</dbReference>
<dbReference type="CDD" id="cd04738">
    <property type="entry name" value="DHOD_2_like"/>
    <property type="match status" value="1"/>
</dbReference>
<dbReference type="FunFam" id="3.20.20.70:FF:000319">
    <property type="entry name" value="Dihydroorotate dehydrogenase (quinone)"/>
    <property type="match status" value="1"/>
</dbReference>
<dbReference type="Gene3D" id="3.20.20.70">
    <property type="entry name" value="Aldolase class I"/>
    <property type="match status" value="1"/>
</dbReference>
<dbReference type="HAMAP" id="MF_00225">
    <property type="entry name" value="DHO_dh_type2"/>
    <property type="match status" value="1"/>
</dbReference>
<dbReference type="InterPro" id="IPR013785">
    <property type="entry name" value="Aldolase_TIM"/>
</dbReference>
<dbReference type="InterPro" id="IPR050074">
    <property type="entry name" value="DHO_dehydrogenase"/>
</dbReference>
<dbReference type="InterPro" id="IPR012135">
    <property type="entry name" value="Dihydroorotate_DH_1_2"/>
</dbReference>
<dbReference type="InterPro" id="IPR005719">
    <property type="entry name" value="Dihydroorotate_DH_2"/>
</dbReference>
<dbReference type="InterPro" id="IPR005720">
    <property type="entry name" value="Dihydroorotate_DH_cat"/>
</dbReference>
<dbReference type="InterPro" id="IPR001295">
    <property type="entry name" value="Dihydroorotate_DH_CS"/>
</dbReference>
<dbReference type="NCBIfam" id="NF003649">
    <property type="entry name" value="PRK05286.2-2"/>
    <property type="match status" value="1"/>
</dbReference>
<dbReference type="NCBIfam" id="NF003652">
    <property type="entry name" value="PRK05286.2-5"/>
    <property type="match status" value="1"/>
</dbReference>
<dbReference type="NCBIfam" id="TIGR01036">
    <property type="entry name" value="pyrD_sub2"/>
    <property type="match status" value="1"/>
</dbReference>
<dbReference type="PANTHER" id="PTHR48109:SF4">
    <property type="entry name" value="DIHYDROOROTATE DEHYDROGENASE (QUINONE), MITOCHONDRIAL"/>
    <property type="match status" value="1"/>
</dbReference>
<dbReference type="PANTHER" id="PTHR48109">
    <property type="entry name" value="DIHYDROOROTATE DEHYDROGENASE (QUINONE), MITOCHONDRIAL-RELATED"/>
    <property type="match status" value="1"/>
</dbReference>
<dbReference type="Pfam" id="PF01180">
    <property type="entry name" value="DHO_dh"/>
    <property type="match status" value="1"/>
</dbReference>
<dbReference type="PIRSF" id="PIRSF000164">
    <property type="entry name" value="DHO_oxidase"/>
    <property type="match status" value="1"/>
</dbReference>
<dbReference type="SUPFAM" id="SSF51395">
    <property type="entry name" value="FMN-linked oxidoreductases"/>
    <property type="match status" value="1"/>
</dbReference>
<dbReference type="PROSITE" id="PS00911">
    <property type="entry name" value="DHODEHASE_1"/>
    <property type="match status" value="1"/>
</dbReference>
<dbReference type="PROSITE" id="PS00912">
    <property type="entry name" value="DHODEHASE_2"/>
    <property type="match status" value="1"/>
</dbReference>
<sequence>MLYSLLKKYLFSLDAEDAHEKVCKILRMLSSSPFLCGLIDSQWGYKNPKLENEILGLHFPNPLGLAAGFDKNISMLRALIAFGFGYLEAGTLTNEAQVGNERPRLFRHIEEESLQNAMGFNNHGAILAARSFNRFAPYKTPIGINLGKNKRIEQVHALEDYKAVLNKCLNIGDYYTFNLSSPNTPNLRDLQNKAFVNELFCMAKEMTHKPLFLKIAPDLEIDDMLEVVNSAIEAGAHGIIATNTTIDKSLVFAPKEMGGLSGKCLTKKSREIFKELAKAFFNKSVLVSVGGISDAKEAYERIKMGASLLQIYSAFIYNGPNLCQNILKDLVKLLQKDGFLSVKEAIGADLR</sequence>
<feature type="chain" id="PRO_1000100268" description="Dihydroorotate dehydrogenase (quinone)">
    <location>
        <begin position="1"/>
        <end position="351"/>
    </location>
</feature>
<feature type="active site" description="Nucleophile" evidence="1">
    <location>
        <position position="181"/>
    </location>
</feature>
<feature type="binding site" evidence="1">
    <location>
        <begin position="67"/>
        <end position="71"/>
    </location>
    <ligand>
        <name>FMN</name>
        <dbReference type="ChEBI" id="CHEBI:58210"/>
    </ligand>
</feature>
<feature type="binding site" evidence="1">
    <location>
        <position position="71"/>
    </location>
    <ligand>
        <name>substrate</name>
    </ligand>
</feature>
<feature type="binding site" evidence="1">
    <location>
        <position position="91"/>
    </location>
    <ligand>
        <name>FMN</name>
        <dbReference type="ChEBI" id="CHEBI:58210"/>
    </ligand>
</feature>
<feature type="binding site" evidence="1">
    <location>
        <begin position="116"/>
        <end position="120"/>
    </location>
    <ligand>
        <name>substrate</name>
    </ligand>
</feature>
<feature type="binding site" evidence="1">
    <location>
        <position position="145"/>
    </location>
    <ligand>
        <name>FMN</name>
        <dbReference type="ChEBI" id="CHEBI:58210"/>
    </ligand>
</feature>
<feature type="binding site" evidence="1">
    <location>
        <position position="178"/>
    </location>
    <ligand>
        <name>FMN</name>
        <dbReference type="ChEBI" id="CHEBI:58210"/>
    </ligand>
</feature>
<feature type="binding site" evidence="1">
    <location>
        <position position="178"/>
    </location>
    <ligand>
        <name>substrate</name>
    </ligand>
</feature>
<feature type="binding site" evidence="1">
    <location>
        <position position="183"/>
    </location>
    <ligand>
        <name>substrate</name>
    </ligand>
</feature>
<feature type="binding site" evidence="1">
    <location>
        <position position="214"/>
    </location>
    <ligand>
        <name>FMN</name>
        <dbReference type="ChEBI" id="CHEBI:58210"/>
    </ligand>
</feature>
<feature type="binding site" evidence="1">
    <location>
        <position position="242"/>
    </location>
    <ligand>
        <name>FMN</name>
        <dbReference type="ChEBI" id="CHEBI:58210"/>
    </ligand>
</feature>
<feature type="binding site" evidence="1">
    <location>
        <begin position="243"/>
        <end position="244"/>
    </location>
    <ligand>
        <name>substrate</name>
    </ligand>
</feature>
<feature type="binding site" evidence="1">
    <location>
        <position position="262"/>
    </location>
    <ligand>
        <name>FMN</name>
        <dbReference type="ChEBI" id="CHEBI:58210"/>
    </ligand>
</feature>
<feature type="binding site" evidence="1">
    <location>
        <position position="291"/>
    </location>
    <ligand>
        <name>FMN</name>
        <dbReference type="ChEBI" id="CHEBI:58210"/>
    </ligand>
</feature>
<feature type="binding site" evidence="1">
    <location>
        <begin position="312"/>
        <end position="313"/>
    </location>
    <ligand>
        <name>FMN</name>
        <dbReference type="ChEBI" id="CHEBI:58210"/>
    </ligand>
</feature>
<accession>B2USR9</accession>
<evidence type="ECO:0000255" key="1">
    <source>
        <dbReference type="HAMAP-Rule" id="MF_00225"/>
    </source>
</evidence>
<reference key="1">
    <citation type="submission" date="2008-05" db="EMBL/GenBank/DDBJ databases">
        <title>Genome sequence of Helicobacter pylori from the remote Amazon: traces of Asian ancestry of the first Americans.</title>
        <authorList>
            <person name="Kersulyte D."/>
            <person name="Kalia A."/>
            <person name="Gilman R.H."/>
            <person name="Berg D.E."/>
        </authorList>
    </citation>
    <scope>NUCLEOTIDE SEQUENCE [LARGE SCALE GENOMIC DNA]</scope>
    <source>
        <strain>Shi470</strain>
    </source>
</reference>
<gene>
    <name evidence="1" type="primary">pyrD</name>
    <name type="ordered locus">HPSH_02255</name>
</gene>
<comment type="function">
    <text evidence="1">Catalyzes the conversion of dihydroorotate to orotate with quinone as electron acceptor.</text>
</comment>
<comment type="catalytic activity">
    <reaction evidence="1">
        <text>(S)-dihydroorotate + a quinone = orotate + a quinol</text>
        <dbReference type="Rhea" id="RHEA:30187"/>
        <dbReference type="ChEBI" id="CHEBI:24646"/>
        <dbReference type="ChEBI" id="CHEBI:30839"/>
        <dbReference type="ChEBI" id="CHEBI:30864"/>
        <dbReference type="ChEBI" id="CHEBI:132124"/>
        <dbReference type="EC" id="1.3.5.2"/>
    </reaction>
</comment>
<comment type="cofactor">
    <cofactor evidence="1">
        <name>FMN</name>
        <dbReference type="ChEBI" id="CHEBI:58210"/>
    </cofactor>
    <text evidence="1">Binds 1 FMN per subunit.</text>
</comment>
<comment type="pathway">
    <text evidence="1">Pyrimidine metabolism; UMP biosynthesis via de novo pathway; orotate from (S)-dihydroorotate (quinone route): step 1/1.</text>
</comment>
<comment type="subunit">
    <text evidence="1">Monomer.</text>
</comment>
<comment type="subcellular location">
    <subcellularLocation>
        <location evidence="1">Cell membrane</location>
        <topology evidence="1">Peripheral membrane protein</topology>
    </subcellularLocation>
</comment>
<comment type="similarity">
    <text evidence="1">Belongs to the dihydroorotate dehydrogenase family. Type 2 subfamily.</text>
</comment>
<protein>
    <recommendedName>
        <fullName evidence="1">Dihydroorotate dehydrogenase (quinone)</fullName>
        <ecNumber evidence="1">1.3.5.2</ecNumber>
    </recommendedName>
    <alternativeName>
        <fullName evidence="1">DHOdehase</fullName>
        <shortName evidence="1">DHOD</shortName>
        <shortName evidence="1">DHODase</shortName>
    </alternativeName>
    <alternativeName>
        <fullName evidence="1">Dihydroorotate oxidase</fullName>
    </alternativeName>
</protein>
<name>PYRD_HELPS</name>